<name>RS4_METAR</name>
<proteinExistence type="inferred from homology"/>
<comment type="function">
    <text evidence="1">One of the primary rRNA binding proteins, it binds directly to 16S rRNA where it nucleates assembly of the body of the 30S subunit.</text>
</comment>
<comment type="function">
    <text evidence="1">With S5 and S12 plays an important role in translational accuracy.</text>
</comment>
<comment type="subunit">
    <text evidence="1">Part of the 30S ribosomal subunit. Contacts protein S5. The interaction surface between S4 and S5 is involved in control of translational fidelity.</text>
</comment>
<comment type="similarity">
    <text evidence="1">Belongs to the universal ribosomal protein uS4 family.</text>
</comment>
<protein>
    <recommendedName>
        <fullName evidence="1">Small ribosomal subunit protein uS4</fullName>
    </recommendedName>
    <alternativeName>
        <fullName evidence="3">30S ribosomal protein S4</fullName>
    </alternativeName>
</protein>
<keyword id="KW-1185">Reference proteome</keyword>
<keyword id="KW-0687">Ribonucleoprotein</keyword>
<keyword id="KW-0689">Ribosomal protein</keyword>
<keyword id="KW-0694">RNA-binding</keyword>
<keyword id="KW-0699">rRNA-binding</keyword>
<feature type="chain" id="PRO_0000293415" description="Small ribosomal subunit protein uS4">
    <location>
        <begin position="1"/>
        <end position="205"/>
    </location>
</feature>
<feature type="domain" description="S4 RNA-binding" evidence="1">
    <location>
        <begin position="110"/>
        <end position="172"/>
    </location>
</feature>
<feature type="region of interest" description="Disordered" evidence="2">
    <location>
        <begin position="173"/>
        <end position="205"/>
    </location>
</feature>
<feature type="compositionally biased region" description="Low complexity" evidence="2">
    <location>
        <begin position="174"/>
        <end position="205"/>
    </location>
</feature>
<reference key="1">
    <citation type="journal article" date="2006" name="Science">
        <title>Genome of rice cluster I archaea -- the key methane producers in the rice rhizosphere.</title>
        <authorList>
            <person name="Erkel C."/>
            <person name="Kube M."/>
            <person name="Reinhardt R."/>
            <person name="Liesack W."/>
        </authorList>
    </citation>
    <scope>NUCLEOTIDE SEQUENCE [LARGE SCALE GENOMIC DNA]</scope>
    <source>
        <strain>DSM 22066 / NBRC 105507 / MRE50</strain>
    </source>
</reference>
<evidence type="ECO:0000255" key="1">
    <source>
        <dbReference type="HAMAP-Rule" id="MF_01306"/>
    </source>
</evidence>
<evidence type="ECO:0000256" key="2">
    <source>
        <dbReference type="SAM" id="MobiDB-lite"/>
    </source>
</evidence>
<evidence type="ECO:0000305" key="3"/>
<sequence>MGYPGQAKKLYDTPNHPWQKARIDEETSLVKKYGLRNKKSVWKHASDLRKYRSNARALLGVMSAGNLPEDSHYIRDAQNIVKKLQTLGILKEDAKLEDVLALKVDDIMERRLQTIIYRKGFANSIKQARQFIVHGHISLNGRKITVPGYLVLKSEEDMLSYYVGSPITKEKLMAKPQPASAPKAAAAPKAAAAPAEAAAAPKKEE</sequence>
<gene>
    <name evidence="1" type="primary">rps4</name>
    <name type="ordered locus">UNCMA_06180</name>
    <name type="ORF">RCIX2581</name>
</gene>
<organism>
    <name type="scientific">Methanocella arvoryzae (strain DSM 22066 / NBRC 105507 / MRE50)</name>
    <dbReference type="NCBI Taxonomy" id="351160"/>
    <lineage>
        <taxon>Archaea</taxon>
        <taxon>Methanobacteriati</taxon>
        <taxon>Methanobacteriota</taxon>
        <taxon>Stenosarchaea group</taxon>
        <taxon>Methanomicrobia</taxon>
        <taxon>Methanocellales</taxon>
        <taxon>Methanocellaceae</taxon>
        <taxon>Methanocella</taxon>
    </lineage>
</organism>
<accession>Q0W1V5</accession>
<dbReference type="EMBL" id="AM114193">
    <property type="protein sequence ID" value="CAJ37638.1"/>
    <property type="molecule type" value="Genomic_DNA"/>
</dbReference>
<dbReference type="RefSeq" id="WP_012034947.1">
    <property type="nucleotide sequence ID" value="NC_009464.1"/>
</dbReference>
<dbReference type="SMR" id="Q0W1V5"/>
<dbReference type="STRING" id="351160.RCIX2581"/>
<dbReference type="GeneID" id="5144925"/>
<dbReference type="KEGG" id="rci:RCIX2581"/>
<dbReference type="PATRIC" id="fig|351160.9.peg.645"/>
<dbReference type="eggNOG" id="arCOG04239">
    <property type="taxonomic scope" value="Archaea"/>
</dbReference>
<dbReference type="OrthoDB" id="10429at2157"/>
<dbReference type="Proteomes" id="UP000000663">
    <property type="component" value="Chromosome"/>
</dbReference>
<dbReference type="GO" id="GO:0015935">
    <property type="term" value="C:small ribosomal subunit"/>
    <property type="evidence" value="ECO:0007669"/>
    <property type="project" value="InterPro"/>
</dbReference>
<dbReference type="GO" id="GO:0019843">
    <property type="term" value="F:rRNA binding"/>
    <property type="evidence" value="ECO:0007669"/>
    <property type="project" value="UniProtKB-UniRule"/>
</dbReference>
<dbReference type="GO" id="GO:0003735">
    <property type="term" value="F:structural constituent of ribosome"/>
    <property type="evidence" value="ECO:0007669"/>
    <property type="project" value="InterPro"/>
</dbReference>
<dbReference type="GO" id="GO:0042274">
    <property type="term" value="P:ribosomal small subunit biogenesis"/>
    <property type="evidence" value="ECO:0007669"/>
    <property type="project" value="TreeGrafter"/>
</dbReference>
<dbReference type="GO" id="GO:0006412">
    <property type="term" value="P:translation"/>
    <property type="evidence" value="ECO:0007669"/>
    <property type="project" value="UniProtKB-UniRule"/>
</dbReference>
<dbReference type="CDD" id="cd00165">
    <property type="entry name" value="S4"/>
    <property type="match status" value="1"/>
</dbReference>
<dbReference type="Gene3D" id="3.10.290.10">
    <property type="entry name" value="RNA-binding S4 domain"/>
    <property type="match status" value="1"/>
</dbReference>
<dbReference type="HAMAP" id="MF_01306_A">
    <property type="entry name" value="Ribosomal_uS4_A"/>
    <property type="match status" value="1"/>
</dbReference>
<dbReference type="InterPro" id="IPR022801">
    <property type="entry name" value="Ribosomal_uS4"/>
</dbReference>
<dbReference type="InterPro" id="IPR022802">
    <property type="entry name" value="Ribosomal_uS4_arc"/>
</dbReference>
<dbReference type="InterPro" id="IPR018079">
    <property type="entry name" value="Ribosomal_uS4_CS"/>
</dbReference>
<dbReference type="InterPro" id="IPR005710">
    <property type="entry name" value="Ribosomal_uS4_euk/arc"/>
</dbReference>
<dbReference type="InterPro" id="IPR001912">
    <property type="entry name" value="Ribosomal_uS4_N"/>
</dbReference>
<dbReference type="InterPro" id="IPR002942">
    <property type="entry name" value="S4_RNA-bd"/>
</dbReference>
<dbReference type="InterPro" id="IPR036986">
    <property type="entry name" value="S4_RNA-bd_sf"/>
</dbReference>
<dbReference type="NCBIfam" id="NF003139">
    <property type="entry name" value="PRK04051.1"/>
    <property type="match status" value="1"/>
</dbReference>
<dbReference type="NCBIfam" id="TIGR01018">
    <property type="entry name" value="uS4_arch"/>
    <property type="match status" value="1"/>
</dbReference>
<dbReference type="PANTHER" id="PTHR11831">
    <property type="entry name" value="30S 40S RIBOSOMAL PROTEIN"/>
    <property type="match status" value="1"/>
</dbReference>
<dbReference type="PANTHER" id="PTHR11831:SF5">
    <property type="entry name" value="40S RIBOSOMAL PROTEIN S9"/>
    <property type="match status" value="1"/>
</dbReference>
<dbReference type="Pfam" id="PF01479">
    <property type="entry name" value="S4"/>
    <property type="match status" value="1"/>
</dbReference>
<dbReference type="SMART" id="SM01390">
    <property type="entry name" value="Ribosomal_S4"/>
    <property type="match status" value="1"/>
</dbReference>
<dbReference type="SMART" id="SM00363">
    <property type="entry name" value="S4"/>
    <property type="match status" value="1"/>
</dbReference>
<dbReference type="SUPFAM" id="SSF55174">
    <property type="entry name" value="Alpha-L RNA-binding motif"/>
    <property type="match status" value="1"/>
</dbReference>
<dbReference type="PROSITE" id="PS00632">
    <property type="entry name" value="RIBOSOMAL_S4"/>
    <property type="match status" value="1"/>
</dbReference>
<dbReference type="PROSITE" id="PS50889">
    <property type="entry name" value="S4"/>
    <property type="match status" value="1"/>
</dbReference>